<proteinExistence type="evidence at transcript level"/>
<protein>
    <recommendedName>
        <fullName evidence="4">Glutathione S-transferase P</fullName>
        <ecNumber evidence="2">2.5.1.18</ecNumber>
    </recommendedName>
    <alternativeName>
        <fullName>GST class-pi</fullName>
    </alternativeName>
</protein>
<accession>P46424</accession>
<reference key="1">
    <citation type="journal article" date="1994" name="Gene">
        <title>Sequence of the mRNA for a glutathione transferase Pi with a different substrate specificity in V79 Chinese hamster lung cells.</title>
        <authorList>
            <person name="Swedmark S."/>
            <person name="Jenssen D."/>
        </authorList>
    </citation>
    <scope>NUCLEOTIDE SEQUENCE [MRNA]</scope>
    <source>
        <tissue>Lung</tissue>
    </source>
</reference>
<organism>
    <name type="scientific">Cricetulus longicaudatus</name>
    <name type="common">Long-tailed dwarf hamster</name>
    <dbReference type="NCBI Taxonomy" id="10030"/>
    <lineage>
        <taxon>Eukaryota</taxon>
        <taxon>Metazoa</taxon>
        <taxon>Chordata</taxon>
        <taxon>Craniata</taxon>
        <taxon>Vertebrata</taxon>
        <taxon>Euteleostomi</taxon>
        <taxon>Mammalia</taxon>
        <taxon>Eutheria</taxon>
        <taxon>Euarchontoglires</taxon>
        <taxon>Glires</taxon>
        <taxon>Rodentia</taxon>
        <taxon>Myomorpha</taxon>
        <taxon>Muroidea</taxon>
        <taxon>Cricetidae</taxon>
        <taxon>Cricetinae</taxon>
        <taxon>Cricetulus</taxon>
    </lineage>
</organism>
<keyword id="KW-0007">Acetylation</keyword>
<keyword id="KW-0963">Cytoplasm</keyword>
<keyword id="KW-0443">Lipid metabolism</keyword>
<keyword id="KW-0496">Mitochondrion</keyword>
<keyword id="KW-0539">Nucleus</keyword>
<keyword id="KW-0597">Phosphoprotein</keyword>
<keyword id="KW-0808">Transferase</keyword>
<comment type="function">
    <text evidence="2">Conjugation of reduced glutathione to a wide number of exogenous and endogenous hydrophobic electrophiles. Involved in the formation of glutathione conjugates of both prostaglandin A2 (PGA2) and prostaglandin J2 (PGJ2). Participates in the formation of novel hepoxilin regioisomers. Negatively regulates CDK5 activity via p25/p35 translocation to prevent neurodegeneration.</text>
</comment>
<comment type="catalytic activity">
    <reaction evidence="2">
        <text>RX + glutathione = an S-substituted glutathione + a halide anion + H(+)</text>
        <dbReference type="Rhea" id="RHEA:16437"/>
        <dbReference type="ChEBI" id="CHEBI:15378"/>
        <dbReference type="ChEBI" id="CHEBI:16042"/>
        <dbReference type="ChEBI" id="CHEBI:17792"/>
        <dbReference type="ChEBI" id="CHEBI:57925"/>
        <dbReference type="ChEBI" id="CHEBI:90779"/>
        <dbReference type="EC" id="2.5.1.18"/>
    </reaction>
    <physiologicalReaction direction="left-to-right" evidence="2">
        <dbReference type="Rhea" id="RHEA:16438"/>
    </physiologicalReaction>
</comment>
<comment type="catalytic activity">
    <reaction evidence="2">
        <text>prostaglandin J2 + glutathione = prostaglandin J2-S-(R)-glutathione</text>
        <dbReference type="Rhea" id="RHEA:50804"/>
        <dbReference type="ChEBI" id="CHEBI:57925"/>
        <dbReference type="ChEBI" id="CHEBI:133396"/>
        <dbReference type="ChEBI" id="CHEBI:133771"/>
    </reaction>
    <physiologicalReaction direction="left-to-right" evidence="2">
        <dbReference type="Rhea" id="RHEA:50805"/>
    </physiologicalReaction>
</comment>
<comment type="catalytic activity">
    <reaction evidence="2">
        <text>prostaglandin J2 + glutathione = prostaglandin J2-S-(S)-glutathione</text>
        <dbReference type="Rhea" id="RHEA:50808"/>
        <dbReference type="ChEBI" id="CHEBI:57925"/>
        <dbReference type="ChEBI" id="CHEBI:133396"/>
        <dbReference type="ChEBI" id="CHEBI:133772"/>
    </reaction>
    <physiologicalReaction direction="left-to-right" evidence="2">
        <dbReference type="Rhea" id="RHEA:50809"/>
    </physiologicalReaction>
</comment>
<comment type="catalytic activity">
    <reaction evidence="2">
        <text>prostaglandin A2 + glutathione = prostaglandin A2-S-(S)-glutathione</text>
        <dbReference type="Rhea" id="RHEA:50800"/>
        <dbReference type="ChEBI" id="CHEBI:57925"/>
        <dbReference type="ChEBI" id="CHEBI:133370"/>
        <dbReference type="ChEBI" id="CHEBI:133769"/>
    </reaction>
    <physiologicalReaction direction="left-to-right" evidence="2">
        <dbReference type="Rhea" id="RHEA:50801"/>
    </physiologicalReaction>
</comment>
<comment type="catalytic activity">
    <reaction evidence="2">
        <text>11(S)-hydroxy-14(S),15(S)-epoxy-(5Z,8Z,12E)-eicosatrienoate + glutathione = (11S,15S)-dihydroxy-14(R)-S-glutathionyl-(5Z,8Z,12E)-eicosatrienoate</text>
        <dbReference type="Rhea" id="RHEA:50260"/>
        <dbReference type="ChEBI" id="CHEBI:57925"/>
        <dbReference type="ChEBI" id="CHEBI:132200"/>
        <dbReference type="ChEBI" id="CHEBI:132201"/>
    </reaction>
    <physiologicalReaction direction="left-to-right" evidence="2">
        <dbReference type="Rhea" id="RHEA:50261"/>
    </physiologicalReaction>
</comment>
<comment type="subunit">
    <text evidence="1">Homodimer. Interacts with CDK5 (By similarity).</text>
</comment>
<comment type="subcellular location">
    <subcellularLocation>
        <location evidence="1">Cytoplasm</location>
    </subcellularLocation>
    <subcellularLocation>
        <location evidence="1">Mitochondrion</location>
    </subcellularLocation>
    <subcellularLocation>
        <location evidence="1">Nucleus</location>
    </subcellularLocation>
    <text evidence="1">The 83 N-terminal amino acids function as un uncleaved transit peptide, and arginine residues within it are crucial for mitochondrial localization.</text>
</comment>
<comment type="similarity">
    <text evidence="4">Belongs to the GST superfamily. Pi family.</text>
</comment>
<gene>
    <name type="primary">GSTP1</name>
</gene>
<dbReference type="EC" id="2.5.1.18" evidence="2"/>
<dbReference type="EMBL" id="L40381">
    <property type="protein sequence ID" value="AAB39859.1"/>
    <property type="molecule type" value="mRNA"/>
</dbReference>
<dbReference type="EMBL" id="L20466">
    <property type="protein sequence ID" value="AAA36986.1"/>
    <property type="molecule type" value="mRNA"/>
</dbReference>
<dbReference type="PIR" id="I48112">
    <property type="entry name" value="I48112"/>
</dbReference>
<dbReference type="SMR" id="P46424"/>
<dbReference type="KEGG" id="cge:100689311"/>
<dbReference type="GO" id="GO:0005829">
    <property type="term" value="C:cytosol"/>
    <property type="evidence" value="ECO:0007669"/>
    <property type="project" value="TreeGrafter"/>
</dbReference>
<dbReference type="GO" id="GO:0005739">
    <property type="term" value="C:mitochondrion"/>
    <property type="evidence" value="ECO:0007669"/>
    <property type="project" value="UniProtKB-SubCell"/>
</dbReference>
<dbReference type="GO" id="GO:0005634">
    <property type="term" value="C:nucleus"/>
    <property type="evidence" value="ECO:0007669"/>
    <property type="project" value="UniProtKB-SubCell"/>
</dbReference>
<dbReference type="GO" id="GO:0004364">
    <property type="term" value="F:glutathione transferase activity"/>
    <property type="evidence" value="ECO:0000250"/>
    <property type="project" value="UniProtKB"/>
</dbReference>
<dbReference type="GO" id="GO:1901687">
    <property type="term" value="P:glutathione derivative biosynthetic process"/>
    <property type="evidence" value="ECO:0000250"/>
    <property type="project" value="UniProtKB"/>
</dbReference>
<dbReference type="GO" id="GO:0006749">
    <property type="term" value="P:glutathione metabolic process"/>
    <property type="evidence" value="ECO:0007669"/>
    <property type="project" value="TreeGrafter"/>
</dbReference>
<dbReference type="GO" id="GO:0051122">
    <property type="term" value="P:hepoxilin biosynthetic process"/>
    <property type="evidence" value="ECO:0000250"/>
    <property type="project" value="UniProtKB"/>
</dbReference>
<dbReference type="GO" id="GO:0006693">
    <property type="term" value="P:prostaglandin metabolic process"/>
    <property type="evidence" value="ECO:0000250"/>
    <property type="project" value="UniProtKB"/>
</dbReference>
<dbReference type="CDD" id="cd03210">
    <property type="entry name" value="GST_C_Pi"/>
    <property type="match status" value="1"/>
</dbReference>
<dbReference type="CDD" id="cd03076">
    <property type="entry name" value="GST_N_Pi"/>
    <property type="match status" value="1"/>
</dbReference>
<dbReference type="FunFam" id="1.20.1050.10:FF:000047">
    <property type="entry name" value="Glutathione S-transferase P"/>
    <property type="match status" value="1"/>
</dbReference>
<dbReference type="FunFam" id="3.40.30.10:FF:000071">
    <property type="entry name" value="Glutathione S-transferase P"/>
    <property type="match status" value="1"/>
</dbReference>
<dbReference type="Gene3D" id="1.20.1050.10">
    <property type="match status" value="1"/>
</dbReference>
<dbReference type="Gene3D" id="3.40.30.10">
    <property type="entry name" value="Glutaredoxin"/>
    <property type="match status" value="1"/>
</dbReference>
<dbReference type="InterPro" id="IPR010987">
    <property type="entry name" value="Glutathione-S-Trfase_C-like"/>
</dbReference>
<dbReference type="InterPro" id="IPR036282">
    <property type="entry name" value="Glutathione-S-Trfase_C_sf"/>
</dbReference>
<dbReference type="InterPro" id="IPR040079">
    <property type="entry name" value="Glutathione_S-Trfase"/>
</dbReference>
<dbReference type="InterPro" id="IPR004045">
    <property type="entry name" value="Glutathione_S-Trfase_N"/>
</dbReference>
<dbReference type="InterPro" id="IPR004046">
    <property type="entry name" value="GST_C"/>
</dbReference>
<dbReference type="InterPro" id="IPR003082">
    <property type="entry name" value="GST_pi"/>
</dbReference>
<dbReference type="InterPro" id="IPR050213">
    <property type="entry name" value="GST_superfamily"/>
</dbReference>
<dbReference type="InterPro" id="IPR036249">
    <property type="entry name" value="Thioredoxin-like_sf"/>
</dbReference>
<dbReference type="PANTHER" id="PTHR11571">
    <property type="entry name" value="GLUTATHIONE S-TRANSFERASE"/>
    <property type="match status" value="1"/>
</dbReference>
<dbReference type="PANTHER" id="PTHR11571:SF255">
    <property type="entry name" value="GLUTATHIONE S-TRANSFERASE P"/>
    <property type="match status" value="1"/>
</dbReference>
<dbReference type="Pfam" id="PF14497">
    <property type="entry name" value="GST_C_3"/>
    <property type="match status" value="1"/>
</dbReference>
<dbReference type="Pfam" id="PF02798">
    <property type="entry name" value="GST_N"/>
    <property type="match status" value="1"/>
</dbReference>
<dbReference type="PRINTS" id="PR01268">
    <property type="entry name" value="GSTRNSFRASEP"/>
</dbReference>
<dbReference type="SFLD" id="SFLDG01205">
    <property type="entry name" value="AMPS.1"/>
    <property type="match status" value="1"/>
</dbReference>
<dbReference type="SFLD" id="SFLDS00019">
    <property type="entry name" value="Glutathione_Transferase_(cytos"/>
    <property type="match status" value="1"/>
</dbReference>
<dbReference type="SUPFAM" id="SSF47616">
    <property type="entry name" value="GST C-terminal domain-like"/>
    <property type="match status" value="1"/>
</dbReference>
<dbReference type="SUPFAM" id="SSF52833">
    <property type="entry name" value="Thioredoxin-like"/>
    <property type="match status" value="1"/>
</dbReference>
<dbReference type="PROSITE" id="PS50405">
    <property type="entry name" value="GST_CTER"/>
    <property type="match status" value="1"/>
</dbReference>
<dbReference type="PROSITE" id="PS50404">
    <property type="entry name" value="GST_NTER"/>
    <property type="match status" value="1"/>
</dbReference>
<evidence type="ECO:0000250" key="1"/>
<evidence type="ECO:0000250" key="2">
    <source>
        <dbReference type="UniProtKB" id="P09211"/>
    </source>
</evidence>
<evidence type="ECO:0000250" key="3">
    <source>
        <dbReference type="UniProtKB" id="P19157"/>
    </source>
</evidence>
<evidence type="ECO:0000305" key="4"/>
<name>GSTP1_CRILO</name>
<sequence>MPPYTIVYFPVRGRCEAMRILLADQGQSWKEEVVTVETWRKGSLKSTCLYGQLPKFEDGDLTLYQSNAILRHLGRSLGLYGKDQREAALVDMVNDGVEDLRCKYITLIYTKYEEGKDDYVKALPGHLKPFETLLSQNQGGKAFIVGDQISFVDYNLLDLLLIHQVLAPGCLDNFPLLSAYVARLSARPKIKAFLSSPDHVNRPINGNGKQ</sequence>
<feature type="chain" id="PRO_0000185898" description="Glutathione S-transferase P">
    <location>
        <begin position="1"/>
        <end position="210"/>
    </location>
</feature>
<feature type="domain" description="GST N-terminal">
    <location>
        <begin position="2"/>
        <end position="81"/>
    </location>
</feature>
<feature type="domain" description="GST C-terminal">
    <location>
        <begin position="83"/>
        <end position="204"/>
    </location>
</feature>
<feature type="binding site" evidence="2">
    <location>
        <position position="8"/>
    </location>
    <ligand>
        <name>glutathione</name>
        <dbReference type="ChEBI" id="CHEBI:57925"/>
    </ligand>
</feature>
<feature type="binding site" evidence="2">
    <location>
        <position position="14"/>
    </location>
    <ligand>
        <name>glutathione</name>
        <dbReference type="ChEBI" id="CHEBI:57925"/>
    </ligand>
</feature>
<feature type="binding site" evidence="2">
    <location>
        <position position="39"/>
    </location>
    <ligand>
        <name>glutathione</name>
        <dbReference type="ChEBI" id="CHEBI:57925"/>
    </ligand>
</feature>
<feature type="binding site" evidence="2">
    <location>
        <position position="45"/>
    </location>
    <ligand>
        <name>glutathione</name>
        <dbReference type="ChEBI" id="CHEBI:57925"/>
    </ligand>
</feature>
<feature type="binding site" evidence="2">
    <location>
        <begin position="52"/>
        <end position="53"/>
    </location>
    <ligand>
        <name>glutathione</name>
        <dbReference type="ChEBI" id="CHEBI:57925"/>
    </ligand>
</feature>
<feature type="binding site" evidence="2">
    <location>
        <begin position="65"/>
        <end position="66"/>
    </location>
    <ligand>
        <name>glutathione</name>
        <dbReference type="ChEBI" id="CHEBI:57925"/>
    </ligand>
</feature>
<feature type="modified residue" description="Phosphotyrosine; by EGFR" evidence="2">
    <location>
        <position position="4"/>
    </location>
</feature>
<feature type="modified residue" description="Phosphothreonine" evidence="2">
    <location>
        <position position="62"/>
    </location>
</feature>
<feature type="modified residue" description="N6-succinyllysine" evidence="3">
    <location>
        <position position="103"/>
    </location>
</feature>
<feature type="modified residue" description="N6-succinyllysine" evidence="3">
    <location>
        <position position="116"/>
    </location>
</feature>
<feature type="modified residue" description="N6-acetyllysine" evidence="2">
    <location>
        <position position="128"/>
    </location>
</feature>